<dbReference type="EMBL" id="AE008918">
    <property type="protein sequence ID" value="AAL53915.1"/>
    <property type="status" value="ALT_INIT"/>
    <property type="molecule type" value="Genomic_DNA"/>
</dbReference>
<dbReference type="PIR" id="AH3593">
    <property type="entry name" value="AH3593"/>
</dbReference>
<dbReference type="RefSeq" id="WP_002971239.1">
    <property type="nucleotide sequence ID" value="NZ_GG703779.1"/>
</dbReference>
<dbReference type="SMR" id="Q8YC59"/>
<dbReference type="KEGG" id="bme:BMEII0673"/>
<dbReference type="KEGG" id="bmel:DK63_2570"/>
<dbReference type="PATRIC" id="fig|224914.52.peg.2694"/>
<dbReference type="eggNOG" id="COG2220">
    <property type="taxonomic scope" value="Bacteria"/>
</dbReference>
<dbReference type="PhylomeDB" id="Q8YC59"/>
<dbReference type="Proteomes" id="UP000000419">
    <property type="component" value="Chromosome II"/>
</dbReference>
<dbReference type="GO" id="GO:0016787">
    <property type="term" value="F:hydrolase activity"/>
    <property type="evidence" value="ECO:0007669"/>
    <property type="project" value="UniProtKB-UniRule"/>
</dbReference>
<dbReference type="CDD" id="cd06262">
    <property type="entry name" value="metallo-hydrolase-like_MBL-fold"/>
    <property type="match status" value="1"/>
</dbReference>
<dbReference type="Gene3D" id="3.60.15.10">
    <property type="entry name" value="Ribonuclease Z/Hydroxyacylglutathione hydrolase-like"/>
    <property type="match status" value="1"/>
</dbReference>
<dbReference type="HAMAP" id="MF_00457">
    <property type="entry name" value="UPF0173"/>
    <property type="match status" value="1"/>
</dbReference>
<dbReference type="InterPro" id="IPR001279">
    <property type="entry name" value="Metallo-B-lactamas"/>
</dbReference>
<dbReference type="InterPro" id="IPR036866">
    <property type="entry name" value="RibonucZ/Hydroxyglut_hydro"/>
</dbReference>
<dbReference type="InterPro" id="IPR022877">
    <property type="entry name" value="UPF0173"/>
</dbReference>
<dbReference type="InterPro" id="IPR050114">
    <property type="entry name" value="UPF0173_UPF0282_UlaG_hydrolase"/>
</dbReference>
<dbReference type="NCBIfam" id="NF001911">
    <property type="entry name" value="PRK00685.1"/>
    <property type="match status" value="1"/>
</dbReference>
<dbReference type="PANTHER" id="PTHR43546:SF3">
    <property type="entry name" value="UPF0173 METAL-DEPENDENT HYDROLASE MJ1163"/>
    <property type="match status" value="1"/>
</dbReference>
<dbReference type="PANTHER" id="PTHR43546">
    <property type="entry name" value="UPF0173 METAL-DEPENDENT HYDROLASE MJ1163-RELATED"/>
    <property type="match status" value="1"/>
</dbReference>
<dbReference type="Pfam" id="PF13483">
    <property type="entry name" value="Lactamase_B_3"/>
    <property type="match status" value="1"/>
</dbReference>
<dbReference type="SMART" id="SM00849">
    <property type="entry name" value="Lactamase_B"/>
    <property type="match status" value="1"/>
</dbReference>
<dbReference type="SUPFAM" id="SSF56281">
    <property type="entry name" value="Metallo-hydrolase/oxidoreductase"/>
    <property type="match status" value="1"/>
</dbReference>
<keyword id="KW-0378">Hydrolase</keyword>
<organism>
    <name type="scientific">Brucella melitensis biotype 1 (strain ATCC 23456 / CCUG 17765 / NCTC 10094 / 16M)</name>
    <dbReference type="NCBI Taxonomy" id="224914"/>
    <lineage>
        <taxon>Bacteria</taxon>
        <taxon>Pseudomonadati</taxon>
        <taxon>Pseudomonadota</taxon>
        <taxon>Alphaproteobacteria</taxon>
        <taxon>Hyphomicrobiales</taxon>
        <taxon>Brucellaceae</taxon>
        <taxon>Brucella/Ochrobactrum group</taxon>
        <taxon>Brucella</taxon>
    </lineage>
</organism>
<gene>
    <name type="ordered locus">BMEII0673</name>
</gene>
<comment type="similarity">
    <text evidence="1">Belongs to the UPF0173 family.</text>
</comment>
<comment type="sequence caution" evidence="2">
    <conflict type="erroneous initiation">
        <sequence resource="EMBL-CDS" id="AAL53915"/>
    </conflict>
</comment>
<proteinExistence type="inferred from homology"/>
<evidence type="ECO:0000255" key="1">
    <source>
        <dbReference type="HAMAP-Rule" id="MF_00457"/>
    </source>
</evidence>
<evidence type="ECO:0000305" key="2"/>
<sequence length="237" mass="25124">MKITWLGHAAFRVETAKAVILIDPFLNGNPGAKGIDFKEATRGVTHIALTHGHGDHVGDTVAIAREHGATVIANADLASWLGSQGVEKLDPGNTGGTLAHEGFTITFVNALHSSAMLTENGVSQALGNPNGLVFHFEDSPTLYHMGDTDIFSDMALINELHQPEIGIVPIGDRFTMGGAVAALACQRYFNFNSVLPCHYASFPIIDRTADKFIAGMADHPATKVLADPAGTVHSFQA</sequence>
<name>Y3673_BRUME</name>
<protein>
    <recommendedName>
        <fullName evidence="1">UPF0173 metal-dependent hydrolase BMEII0673</fullName>
    </recommendedName>
</protein>
<reference key="1">
    <citation type="journal article" date="2002" name="Proc. Natl. Acad. Sci. U.S.A.">
        <title>The genome sequence of the facultative intracellular pathogen Brucella melitensis.</title>
        <authorList>
            <person name="DelVecchio V.G."/>
            <person name="Kapatral V."/>
            <person name="Redkar R.J."/>
            <person name="Patra G."/>
            <person name="Mujer C."/>
            <person name="Los T."/>
            <person name="Ivanova N."/>
            <person name="Anderson I."/>
            <person name="Bhattacharyya A."/>
            <person name="Lykidis A."/>
            <person name="Reznik G."/>
            <person name="Jablonski L."/>
            <person name="Larsen N."/>
            <person name="D'Souza M."/>
            <person name="Bernal A."/>
            <person name="Mazur M."/>
            <person name="Goltsman E."/>
            <person name="Selkov E."/>
            <person name="Elzer P.H."/>
            <person name="Hagius S."/>
            <person name="O'Callaghan D."/>
            <person name="Letesson J.-J."/>
            <person name="Haselkorn R."/>
            <person name="Kyrpides N.C."/>
            <person name="Overbeek R."/>
        </authorList>
    </citation>
    <scope>NUCLEOTIDE SEQUENCE [LARGE SCALE GENOMIC DNA]</scope>
    <source>
        <strain>ATCC 23456 / CCUG 17765 / NCTC 10094 / 16M</strain>
    </source>
</reference>
<accession>Q8YC59</accession>
<feature type="chain" id="PRO_0000367167" description="UPF0173 metal-dependent hydrolase BMEII0673">
    <location>
        <begin position="1"/>
        <end position="237"/>
    </location>
</feature>